<proteinExistence type="evidence at protein level"/>
<organism>
    <name type="scientific">Saccharomyces cerevisiae (strain ATCC 204508 / S288c)</name>
    <name type="common">Baker's yeast</name>
    <dbReference type="NCBI Taxonomy" id="559292"/>
    <lineage>
        <taxon>Eukaryota</taxon>
        <taxon>Fungi</taxon>
        <taxon>Dikarya</taxon>
        <taxon>Ascomycota</taxon>
        <taxon>Saccharomycotina</taxon>
        <taxon>Saccharomycetes</taxon>
        <taxon>Saccharomycetales</taxon>
        <taxon>Saccharomycetaceae</taxon>
        <taxon>Saccharomyces</taxon>
    </lineage>
</organism>
<name>RRN11_YEAST</name>
<feature type="chain" id="PRO_0000203257" description="RNA polymerase I-specific transcription initiation factor RRN11">
    <location>
        <begin position="1"/>
        <end position="507"/>
    </location>
</feature>
<feature type="region of interest" description="Disordered" evidence="1">
    <location>
        <begin position="37"/>
        <end position="76"/>
    </location>
</feature>
<feature type="region of interest" description="Disordered" evidence="1">
    <location>
        <begin position="89"/>
        <end position="124"/>
    </location>
</feature>
<feature type="compositionally biased region" description="Polar residues" evidence="1">
    <location>
        <begin position="37"/>
        <end position="47"/>
    </location>
</feature>
<feature type="compositionally biased region" description="Acidic residues" evidence="1">
    <location>
        <begin position="97"/>
        <end position="108"/>
    </location>
</feature>
<feature type="compositionally biased region" description="Basic and acidic residues" evidence="1">
    <location>
        <begin position="109"/>
        <end position="124"/>
    </location>
</feature>
<feature type="helix" evidence="8">
    <location>
        <begin position="11"/>
        <end position="37"/>
    </location>
</feature>
<feature type="helix" evidence="7">
    <location>
        <begin position="75"/>
        <end position="83"/>
    </location>
</feature>
<feature type="helix" evidence="8">
    <location>
        <begin position="127"/>
        <end position="130"/>
    </location>
</feature>
<feature type="strand" evidence="8">
    <location>
        <begin position="135"/>
        <end position="139"/>
    </location>
</feature>
<feature type="strand" evidence="8">
    <location>
        <begin position="145"/>
        <end position="147"/>
    </location>
</feature>
<feature type="helix" evidence="8">
    <location>
        <begin position="159"/>
        <end position="165"/>
    </location>
</feature>
<feature type="helix" evidence="8">
    <location>
        <begin position="167"/>
        <end position="173"/>
    </location>
</feature>
<feature type="helix" evidence="8">
    <location>
        <begin position="176"/>
        <end position="179"/>
    </location>
</feature>
<feature type="helix" evidence="8">
    <location>
        <begin position="182"/>
        <end position="191"/>
    </location>
</feature>
<feature type="strand" evidence="10">
    <location>
        <begin position="196"/>
        <end position="199"/>
    </location>
</feature>
<feature type="turn" evidence="8">
    <location>
        <begin position="201"/>
        <end position="203"/>
    </location>
</feature>
<feature type="helix" evidence="8">
    <location>
        <begin position="210"/>
        <end position="225"/>
    </location>
</feature>
<feature type="helix" evidence="8">
    <location>
        <begin position="229"/>
        <end position="239"/>
    </location>
</feature>
<feature type="helix" evidence="8">
    <location>
        <begin position="247"/>
        <end position="252"/>
    </location>
</feature>
<feature type="helix" evidence="8">
    <location>
        <begin position="255"/>
        <end position="258"/>
    </location>
</feature>
<feature type="strand" evidence="7">
    <location>
        <begin position="262"/>
        <end position="265"/>
    </location>
</feature>
<feature type="helix" evidence="8">
    <location>
        <begin position="268"/>
        <end position="277"/>
    </location>
</feature>
<feature type="strand" evidence="7">
    <location>
        <begin position="278"/>
        <end position="280"/>
    </location>
</feature>
<feature type="helix" evidence="8">
    <location>
        <begin position="295"/>
        <end position="298"/>
    </location>
</feature>
<feature type="strand" evidence="7">
    <location>
        <begin position="301"/>
        <end position="303"/>
    </location>
</feature>
<feature type="helix" evidence="8">
    <location>
        <begin position="307"/>
        <end position="321"/>
    </location>
</feature>
<feature type="helix" evidence="8">
    <location>
        <begin position="346"/>
        <end position="354"/>
    </location>
</feature>
<feature type="helix" evidence="8">
    <location>
        <begin position="363"/>
        <end position="378"/>
    </location>
</feature>
<feature type="turn" evidence="9">
    <location>
        <begin position="379"/>
        <end position="383"/>
    </location>
</feature>
<feature type="helix" evidence="8">
    <location>
        <begin position="398"/>
        <end position="420"/>
    </location>
</feature>
<feature type="strand" evidence="8">
    <location>
        <begin position="421"/>
        <end position="423"/>
    </location>
</feature>
<feature type="helix" evidence="8">
    <location>
        <begin position="428"/>
        <end position="440"/>
    </location>
</feature>
<keyword id="KW-0002">3D-structure</keyword>
<keyword id="KW-0539">Nucleus</keyword>
<keyword id="KW-1185">Reference proteome</keyword>
<keyword id="KW-0804">Transcription</keyword>
<keyword id="KW-0805">Transcription regulation</keyword>
<comment type="function">
    <text evidence="6">Acts as a component of the core factor (CF) complex which is essential for the initiation of rDNA transcription by RNA polymerase I. After binding of UAF (upstream activation factor) to an upstream element of the promoter, CF is recruited in a SPT15/TBP-dependent manner to form a preinitiation complex.</text>
</comment>
<comment type="subunit">
    <text evidence="4 5">Component of the core factor (CF) complex, which consists of RRN6, RRN7 and RRN11. The CF heterotrimer may further dimerize to form a hexamer. RRN11 interacts with RRN6, RRN7 and SPT15.</text>
</comment>
<comment type="interaction">
    <interactant intactId="EBI-27790">
        <id>Q04712</id>
    </interactant>
    <interactant intactId="EBI-15986">
        <id>P32786</id>
        <label>RRN6</label>
    </interactant>
    <organismsDiffer>false</organismsDiffer>
    <experiments>3</experiments>
</comment>
<comment type="interaction">
    <interactant intactId="EBI-27790">
        <id>Q04712</id>
    </interactant>
    <interactant intactId="EBI-15990">
        <id>P40992</id>
        <label>RRN7</label>
    </interactant>
    <organismsDiffer>false</organismsDiffer>
    <experiments>3</experiments>
</comment>
<comment type="interaction">
    <interactant intactId="EBI-27790">
        <id>Q04712</id>
    </interactant>
    <interactant intactId="EBI-19129">
        <id>P13393</id>
        <label>SPT15</label>
    </interactant>
    <organismsDiffer>false</organismsDiffer>
    <experiments>2</experiments>
</comment>
<comment type="subcellular location">
    <subcellularLocation>
        <location evidence="2">Nucleus</location>
        <location evidence="2">Nucleolus</location>
    </subcellularLocation>
</comment>
<comment type="miscellaneous">
    <text evidence="3">Present with 476 molecules/cell in log phase SD medium.</text>
</comment>
<gene>
    <name type="primary">RRN11</name>
    <name type="ordered locus">YML043C</name>
    <name type="ORF">YM9827.09C</name>
</gene>
<reference key="1">
    <citation type="journal article" date="1997" name="Nature">
        <title>The nucleotide sequence of Saccharomyces cerevisiae chromosome XIII.</title>
        <authorList>
            <person name="Bowman S."/>
            <person name="Churcher C.M."/>
            <person name="Badcock K."/>
            <person name="Brown D."/>
            <person name="Chillingworth T."/>
            <person name="Connor R."/>
            <person name="Dedman K."/>
            <person name="Devlin K."/>
            <person name="Gentles S."/>
            <person name="Hamlin N."/>
            <person name="Hunt S."/>
            <person name="Jagels K."/>
            <person name="Lye G."/>
            <person name="Moule S."/>
            <person name="Odell C."/>
            <person name="Pearson D."/>
            <person name="Rajandream M.A."/>
            <person name="Rice P."/>
            <person name="Skelton J."/>
            <person name="Walsh S.V."/>
            <person name="Whitehead S."/>
            <person name="Barrell B.G."/>
        </authorList>
    </citation>
    <scope>NUCLEOTIDE SEQUENCE [LARGE SCALE GENOMIC DNA]</scope>
    <source>
        <strain>ATCC 204508 / S288c</strain>
    </source>
</reference>
<reference key="2">
    <citation type="journal article" date="2014" name="G3 (Bethesda)">
        <title>The reference genome sequence of Saccharomyces cerevisiae: Then and now.</title>
        <authorList>
            <person name="Engel S.R."/>
            <person name="Dietrich F.S."/>
            <person name="Fisk D.G."/>
            <person name="Binkley G."/>
            <person name="Balakrishnan R."/>
            <person name="Costanzo M.C."/>
            <person name="Dwight S.S."/>
            <person name="Hitz B.C."/>
            <person name="Karra K."/>
            <person name="Nash R.S."/>
            <person name="Weng S."/>
            <person name="Wong E.D."/>
            <person name="Lloyd P."/>
            <person name="Skrzypek M.S."/>
            <person name="Miyasato S.R."/>
            <person name="Simison M."/>
            <person name="Cherry J.M."/>
        </authorList>
    </citation>
    <scope>GENOME REANNOTATION</scope>
    <source>
        <strain>ATCC 204508 / S288c</strain>
    </source>
</reference>
<reference key="3">
    <citation type="journal article" date="2007" name="Genome Res.">
        <title>Approaching a complete repository of sequence-verified protein-encoding clones for Saccharomyces cerevisiae.</title>
        <authorList>
            <person name="Hu Y."/>
            <person name="Rolfs A."/>
            <person name="Bhullar B."/>
            <person name="Murthy T.V.S."/>
            <person name="Zhu C."/>
            <person name="Berger M.F."/>
            <person name="Camargo A.A."/>
            <person name="Kelley F."/>
            <person name="McCarron S."/>
            <person name="Jepson D."/>
            <person name="Richardson A."/>
            <person name="Raphael J."/>
            <person name="Moreira D."/>
            <person name="Taycher E."/>
            <person name="Zuo D."/>
            <person name="Mohr S."/>
            <person name="Kane M.F."/>
            <person name="Williamson J."/>
            <person name="Simpson A.J.G."/>
            <person name="Bulyk M.L."/>
            <person name="Harlow E."/>
            <person name="Marsischky G."/>
            <person name="Kolodner R.D."/>
            <person name="LaBaer J."/>
        </authorList>
    </citation>
    <scope>NUCLEOTIDE SEQUENCE [GENOMIC DNA]</scope>
    <source>
        <strain>ATCC 204508 / S288c</strain>
    </source>
</reference>
<reference key="4">
    <citation type="journal article" date="1994" name="Genes Dev.">
        <title>RRN6 and RRN7 encode subunits of a multiprotein complex essential for the initiation of rDNA transcription by RNA polymerase I in Saccharomyces cerevisiae.</title>
        <authorList>
            <person name="Keys D.A."/>
            <person name="Vu L."/>
            <person name="Steffan J.S."/>
            <person name="Dodd J.A."/>
            <person name="Yamamoto R.T."/>
            <person name="Nogi Y."/>
            <person name="Nomura M."/>
        </authorList>
    </citation>
    <scope>IDENTIFICATION IN THE CF COMPLEX</scope>
</reference>
<reference key="5">
    <citation type="journal article" date="1996" name="J. Biol. Chem.">
        <title>RRN11 encodes the third subunit of the complex containing Rrn6p and Rrn7p that is essential for the initiation of rDNA transcription by yeast RNA polymerase I.</title>
        <authorList>
            <person name="Lalo D."/>
            <person name="Steffan J.S."/>
            <person name="Dodd J.A."/>
            <person name="Nomura M."/>
        </authorList>
    </citation>
    <scope>IDENTIFICATION IN THE CF COMPLEX</scope>
    <scope>INTERACTION WITH RRN6; RRN7 AND SPT15</scope>
</reference>
<reference key="6">
    <citation type="journal article" date="1996" name="Mol. Cell. Biol.">
        <title>A novel 66-kilodalton protein complexes with Rrn6, Rrn7, and TATA-binding protein to promote polymerase I transcription initiation in Saccharomyces cerevisiae.</title>
        <authorList>
            <person name="Lin C.W."/>
            <person name="Moorefield B."/>
            <person name="Payne J."/>
            <person name="Aprikian P."/>
            <person name="Mitomo K."/>
            <person name="Reeder R.H."/>
        </authorList>
    </citation>
    <scope>FUNCTION OF THE CF COMPLEX</scope>
</reference>
<reference key="7">
    <citation type="journal article" date="2003" name="Nature">
        <title>Global analysis of protein localization in budding yeast.</title>
        <authorList>
            <person name="Huh W.-K."/>
            <person name="Falvo J.V."/>
            <person name="Gerke L.C."/>
            <person name="Carroll A.S."/>
            <person name="Howson R.W."/>
            <person name="Weissman J.S."/>
            <person name="O'Shea E.K."/>
        </authorList>
    </citation>
    <scope>SUBCELLULAR LOCATION [LARGE SCALE ANALYSIS]</scope>
</reference>
<reference key="8">
    <citation type="journal article" date="2003" name="Nature">
        <title>Global analysis of protein expression in yeast.</title>
        <authorList>
            <person name="Ghaemmaghami S."/>
            <person name="Huh W.-K."/>
            <person name="Bower K."/>
            <person name="Howson R.W."/>
            <person name="Belle A."/>
            <person name="Dephoure N."/>
            <person name="O'Shea E.K."/>
            <person name="Weissman J.S."/>
        </authorList>
    </citation>
    <scope>LEVEL OF PROTEIN EXPRESSION [LARGE SCALE ANALYSIS]</scope>
</reference>
<sequence>MFEVPITLTNRKFAQRRKLKYQYINYISRRFDRISKKSTTTDSLPTPENSAAENNDEEEGQNSEAGTYRRSVLQQKKRRRERHWRSVVGEIYSTTESETDSQEEETEEGGEHDTGIDKEDSDEERKFWKKYEKPEKSFEIWRTVSSQNKQPINKQKMTYHNFKKIEKIPLRKMEIPLLHCTKENKLYFQSISRGLEPLKTSTSEVRNYRTRHIVTLTDLLHLNVSRHNWSLAYKIFATLIRIPGVQIKSLWGIGVEILDNLSNSSSGLDFLQWMCQIYSSKSRFVQNINYRSIVPPFQTGSRTHTAKFAITYLWSSLINCQKSMEPSSNIIDKPFDTENDLLQELIDKISEWVLTPPFMEDAEVWFIYASCHLLKADTLSRQFVNDNKNNDLIGLDRDIKINQVIKHIHYVRTFLKICLDKGGFAVPSRLIENQLKSFESRLYGEAQDIQERDVANVYDSIDNSSVENSFGDVYETNAEFLDTQLMDLSPEDNGLDEMHYSDEDSSE</sequence>
<evidence type="ECO:0000256" key="1">
    <source>
        <dbReference type="SAM" id="MobiDB-lite"/>
    </source>
</evidence>
<evidence type="ECO:0000269" key="2">
    <source>
    </source>
</evidence>
<evidence type="ECO:0000269" key="3">
    <source>
    </source>
</evidence>
<evidence type="ECO:0000269" key="4">
    <source>
    </source>
</evidence>
<evidence type="ECO:0000269" key="5">
    <source>
    </source>
</evidence>
<evidence type="ECO:0000269" key="6">
    <source>
    </source>
</evidence>
<evidence type="ECO:0007829" key="7">
    <source>
        <dbReference type="PDB" id="5O7X"/>
    </source>
</evidence>
<evidence type="ECO:0007829" key="8">
    <source>
        <dbReference type="PDB" id="6RUI"/>
    </source>
</evidence>
<evidence type="ECO:0007829" key="9">
    <source>
        <dbReference type="PDB" id="6RUO"/>
    </source>
</evidence>
<evidence type="ECO:0007829" key="10">
    <source>
        <dbReference type="PDB" id="6RWE"/>
    </source>
</evidence>
<protein>
    <recommendedName>
        <fullName>RNA polymerase I-specific transcription initiation factor RRN11</fullName>
    </recommendedName>
</protein>
<accession>Q04712</accession>
<accession>D6VZD2</accession>
<dbReference type="EMBL" id="Z47816">
    <property type="protein sequence ID" value="CAA87831.1"/>
    <property type="molecule type" value="Genomic_DNA"/>
</dbReference>
<dbReference type="EMBL" id="AY692808">
    <property type="protein sequence ID" value="AAT92827.1"/>
    <property type="molecule type" value="Genomic_DNA"/>
</dbReference>
<dbReference type="EMBL" id="BK006946">
    <property type="protein sequence ID" value="DAA09856.1"/>
    <property type="molecule type" value="Genomic_DNA"/>
</dbReference>
<dbReference type="PIR" id="S50949">
    <property type="entry name" value="S50949"/>
</dbReference>
<dbReference type="RefSeq" id="NP_013669.1">
    <property type="nucleotide sequence ID" value="NM_001182401.1"/>
</dbReference>
<dbReference type="PDB" id="5N5Y">
    <property type="method" value="EM"/>
    <property type="resolution" value="7.70 A"/>
    <property type="chains" value="R=1-507"/>
</dbReference>
<dbReference type="PDB" id="5N5Z">
    <property type="method" value="EM"/>
    <property type="resolution" value="7.70 A"/>
    <property type="chains" value="R=1-507"/>
</dbReference>
<dbReference type="PDB" id="5N60">
    <property type="method" value="EM"/>
    <property type="resolution" value="7.70 A"/>
    <property type="chains" value="R=1-507"/>
</dbReference>
<dbReference type="PDB" id="5N61">
    <property type="method" value="EM"/>
    <property type="resolution" value="3.40 A"/>
    <property type="chains" value="R=1-507"/>
</dbReference>
<dbReference type="PDB" id="5O7X">
    <property type="method" value="X-ray"/>
    <property type="resolution" value="3.20 A"/>
    <property type="chains" value="C/F/I/L/O/R=1-507"/>
</dbReference>
<dbReference type="PDB" id="5OA1">
    <property type="method" value="EM"/>
    <property type="resolution" value="4.40 A"/>
    <property type="chains" value="W=1-507"/>
</dbReference>
<dbReference type="PDB" id="5W5Y">
    <property type="method" value="EM"/>
    <property type="resolution" value="3.80 A"/>
    <property type="chains" value="Q=1-507"/>
</dbReference>
<dbReference type="PDB" id="5W64">
    <property type="method" value="EM"/>
    <property type="resolution" value="4.20 A"/>
    <property type="chains" value="Q=1-507"/>
</dbReference>
<dbReference type="PDB" id="5W65">
    <property type="method" value="EM"/>
    <property type="resolution" value="4.30 A"/>
    <property type="chains" value="Q=1-507"/>
</dbReference>
<dbReference type="PDB" id="5W66">
    <property type="method" value="EM"/>
    <property type="resolution" value="3.90 A"/>
    <property type="chains" value="Q=1-507"/>
</dbReference>
<dbReference type="PDB" id="6RQH">
    <property type="method" value="EM"/>
    <property type="resolution" value="3.70 A"/>
    <property type="chains" value="R=1-507"/>
</dbReference>
<dbReference type="PDB" id="6RQL">
    <property type="method" value="EM"/>
    <property type="resolution" value="2.90 A"/>
    <property type="chains" value="R=1-507"/>
</dbReference>
<dbReference type="PDB" id="6RRD">
    <property type="method" value="EM"/>
    <property type="resolution" value="3.10 A"/>
    <property type="chains" value="R=1-507"/>
</dbReference>
<dbReference type="PDB" id="6RUI">
    <property type="method" value="EM"/>
    <property type="resolution" value="2.70 A"/>
    <property type="chains" value="R=1-507"/>
</dbReference>
<dbReference type="PDB" id="6RUO">
    <property type="method" value="EM"/>
    <property type="resolution" value="3.50 A"/>
    <property type="chains" value="R=1-507"/>
</dbReference>
<dbReference type="PDB" id="6RWE">
    <property type="method" value="EM"/>
    <property type="resolution" value="3.00 A"/>
    <property type="chains" value="R=1-507"/>
</dbReference>
<dbReference type="PDB" id="6TPS">
    <property type="method" value="EM"/>
    <property type="resolution" value="3.54 A"/>
    <property type="chains" value="R=1-507"/>
</dbReference>
<dbReference type="PDBsum" id="5N5Y"/>
<dbReference type="PDBsum" id="5N5Z"/>
<dbReference type="PDBsum" id="5N60"/>
<dbReference type="PDBsum" id="5N61"/>
<dbReference type="PDBsum" id="5O7X"/>
<dbReference type="PDBsum" id="5OA1"/>
<dbReference type="PDBsum" id="5W5Y"/>
<dbReference type="PDBsum" id="5W64"/>
<dbReference type="PDBsum" id="5W65"/>
<dbReference type="PDBsum" id="5W66"/>
<dbReference type="PDBsum" id="6RQH"/>
<dbReference type="PDBsum" id="6RQL"/>
<dbReference type="PDBsum" id="6RRD"/>
<dbReference type="PDBsum" id="6RUI"/>
<dbReference type="PDBsum" id="6RUO"/>
<dbReference type="PDBsum" id="6RWE"/>
<dbReference type="PDBsum" id="6TPS"/>
<dbReference type="EMDB" id="EMD-10006"/>
<dbReference type="EMDB" id="EMD-10007"/>
<dbReference type="EMDB" id="EMD-10038"/>
<dbReference type="EMDB" id="EMD-10544"/>
<dbReference type="EMDB" id="EMD-3590"/>
<dbReference type="EMDB" id="EMD-3591"/>
<dbReference type="EMDB" id="EMD-3592"/>
<dbReference type="EMDB" id="EMD-3593"/>
<dbReference type="EMDB" id="EMD-3727"/>
<dbReference type="EMDB" id="EMD-4982"/>
<dbReference type="EMDB" id="EMD-4984"/>
<dbReference type="EMDB" id="EMD-4987"/>
<dbReference type="EMDB" id="EMD-8771"/>
<dbReference type="EMDB" id="EMD-8772"/>
<dbReference type="EMDB" id="EMD-8774"/>
<dbReference type="EMDB" id="EMD-8775"/>
<dbReference type="EMDB" id="EMD-8776"/>
<dbReference type="EMDB" id="EMD-8777"/>
<dbReference type="SMR" id="Q04712"/>
<dbReference type="BioGRID" id="35126">
    <property type="interactions" value="80"/>
</dbReference>
<dbReference type="ComplexPortal" id="CPX-1836">
    <property type="entry name" value="RNA polymerase I core factor complex"/>
</dbReference>
<dbReference type="DIP" id="DIP-4542N"/>
<dbReference type="FunCoup" id="Q04712">
    <property type="interactions" value="104"/>
</dbReference>
<dbReference type="IntAct" id="Q04712">
    <property type="interactions" value="11"/>
</dbReference>
<dbReference type="MINT" id="Q04712"/>
<dbReference type="STRING" id="4932.YML043C"/>
<dbReference type="iPTMnet" id="Q04712"/>
<dbReference type="PaxDb" id="4932-YML043C"/>
<dbReference type="PeptideAtlas" id="Q04712"/>
<dbReference type="EnsemblFungi" id="YML043C_mRNA">
    <property type="protein sequence ID" value="YML043C"/>
    <property type="gene ID" value="YML043C"/>
</dbReference>
<dbReference type="GeneID" id="854964"/>
<dbReference type="KEGG" id="sce:YML043C"/>
<dbReference type="AGR" id="SGD:S000004507"/>
<dbReference type="SGD" id="S000004507">
    <property type="gene designation" value="RRN11"/>
</dbReference>
<dbReference type="VEuPathDB" id="FungiDB:YML043C"/>
<dbReference type="eggNOG" id="ENOG502R1IK">
    <property type="taxonomic scope" value="Eukaryota"/>
</dbReference>
<dbReference type="HOGENOM" id="CLU_034126_0_0_1"/>
<dbReference type="InParanoid" id="Q04712"/>
<dbReference type="OMA" id="EVWFIYA"/>
<dbReference type="OrthoDB" id="2159786at2759"/>
<dbReference type="BioCyc" id="YEAST:G3O-32641-MONOMER"/>
<dbReference type="BioGRID-ORCS" id="854964">
    <property type="hits" value="0 hits in 10 CRISPR screens"/>
</dbReference>
<dbReference type="PRO" id="PR:Q04712"/>
<dbReference type="Proteomes" id="UP000002311">
    <property type="component" value="Chromosome XIII"/>
</dbReference>
<dbReference type="RNAct" id="Q04712">
    <property type="molecule type" value="protein"/>
</dbReference>
<dbReference type="GO" id="GO:0005730">
    <property type="term" value="C:nucleolus"/>
    <property type="evidence" value="ECO:0000314"/>
    <property type="project" value="SGD"/>
</dbReference>
<dbReference type="GO" id="GO:0005634">
    <property type="term" value="C:nucleus"/>
    <property type="evidence" value="ECO:0000303"/>
    <property type="project" value="ComplexPortal"/>
</dbReference>
<dbReference type="GO" id="GO:0070860">
    <property type="term" value="C:RNA polymerase I core factor complex"/>
    <property type="evidence" value="ECO:0000314"/>
    <property type="project" value="SGD"/>
</dbReference>
<dbReference type="GO" id="GO:0001164">
    <property type="term" value="F:RNA polymerase I core promoter sequence-specific DNA binding"/>
    <property type="evidence" value="ECO:0000314"/>
    <property type="project" value="SGD"/>
</dbReference>
<dbReference type="GO" id="GO:0001181">
    <property type="term" value="F:RNA polymerase I general transcription initiation factor activity"/>
    <property type="evidence" value="ECO:0007669"/>
    <property type="project" value="InterPro"/>
</dbReference>
<dbReference type="GO" id="GO:0017025">
    <property type="term" value="F:TBP-class protein binding"/>
    <property type="evidence" value="ECO:0000314"/>
    <property type="project" value="SGD"/>
</dbReference>
<dbReference type="GO" id="GO:0042790">
    <property type="term" value="P:nucleolar large rRNA transcription by RNA polymerase I"/>
    <property type="evidence" value="ECO:0000314"/>
    <property type="project" value="ComplexPortal"/>
</dbReference>
<dbReference type="InterPro" id="IPR053029">
    <property type="entry name" value="RNA_pol_I-specific_init_factor"/>
</dbReference>
<dbReference type="InterPro" id="IPR007224">
    <property type="entry name" value="TIF_Rrn11"/>
</dbReference>
<dbReference type="InterPro" id="IPR016850">
    <property type="entry name" value="TIF_Rrn11_budding_yeast"/>
</dbReference>
<dbReference type="PANTHER" id="PTHR28244">
    <property type="entry name" value="RNA POLYMERASE I-SPECIFIC TRANSCRIPTION INITIATION FACTOR RRN11"/>
    <property type="match status" value="1"/>
</dbReference>
<dbReference type="PANTHER" id="PTHR28244:SF1">
    <property type="entry name" value="RNA POLYMERASE I-SPECIFIC TRANSCRIPTION INITIATION FACTOR RRN11"/>
    <property type="match status" value="1"/>
</dbReference>
<dbReference type="Pfam" id="PF04090">
    <property type="entry name" value="Rrn11"/>
    <property type="match status" value="1"/>
</dbReference>
<dbReference type="PIRSF" id="PIRSF027133">
    <property type="entry name" value="Rrn11"/>
    <property type="match status" value="1"/>
</dbReference>